<gene>
    <name evidence="1" type="primary">aroK</name>
    <name type="ordered locus">FTN_1136</name>
</gene>
<accession>A0Q707</accession>
<sequence length="176" mass="19737">MIRTKNIFLIGPVGAGKSTIGKQLAKQLKLEFIDSDDVIEKKCGVDINWIFDLEGEEGFRKREREVIAEILAEKQNIVLATGGGAILDPETRSLLSSRGKVVYLEATIEQQLERTSKDTKRPLLRVDDKRPVLEQLMAEREPLYRSIADVVVETNGATVKNIVNKISTFLVEETIL</sequence>
<organism>
    <name type="scientific">Francisella tularensis subsp. novicida (strain U112)</name>
    <dbReference type="NCBI Taxonomy" id="401614"/>
    <lineage>
        <taxon>Bacteria</taxon>
        <taxon>Pseudomonadati</taxon>
        <taxon>Pseudomonadota</taxon>
        <taxon>Gammaproteobacteria</taxon>
        <taxon>Thiotrichales</taxon>
        <taxon>Francisellaceae</taxon>
        <taxon>Francisella</taxon>
    </lineage>
</organism>
<name>AROK_FRATN</name>
<proteinExistence type="inferred from homology"/>
<evidence type="ECO:0000255" key="1">
    <source>
        <dbReference type="HAMAP-Rule" id="MF_00109"/>
    </source>
</evidence>
<feature type="chain" id="PRO_1000022971" description="Shikimate kinase">
    <location>
        <begin position="1"/>
        <end position="176"/>
    </location>
</feature>
<feature type="binding site" evidence="1">
    <location>
        <begin position="14"/>
        <end position="19"/>
    </location>
    <ligand>
        <name>ATP</name>
        <dbReference type="ChEBI" id="CHEBI:30616"/>
    </ligand>
</feature>
<feature type="binding site" evidence="1">
    <location>
        <position position="18"/>
    </location>
    <ligand>
        <name>Mg(2+)</name>
        <dbReference type="ChEBI" id="CHEBI:18420"/>
    </ligand>
</feature>
<feature type="binding site" evidence="1">
    <location>
        <position position="36"/>
    </location>
    <ligand>
        <name>substrate</name>
    </ligand>
</feature>
<feature type="binding site" evidence="1">
    <location>
        <position position="60"/>
    </location>
    <ligand>
        <name>substrate</name>
    </ligand>
</feature>
<feature type="binding site" evidence="1">
    <location>
        <position position="83"/>
    </location>
    <ligand>
        <name>substrate</name>
    </ligand>
</feature>
<feature type="binding site" evidence="1">
    <location>
        <position position="121"/>
    </location>
    <ligand>
        <name>ATP</name>
        <dbReference type="ChEBI" id="CHEBI:30616"/>
    </ligand>
</feature>
<feature type="binding site" evidence="1">
    <location>
        <position position="140"/>
    </location>
    <ligand>
        <name>substrate</name>
    </ligand>
</feature>
<reference key="1">
    <citation type="journal article" date="2007" name="Genome Biol.">
        <title>Comparison of Francisella tularensis genomes reveals evolutionary events associated with the emergence of human pathogenic strains.</title>
        <authorList>
            <person name="Rohmer L."/>
            <person name="Fong C."/>
            <person name="Abmayr S."/>
            <person name="Wasnick M."/>
            <person name="Larson Freeman T.J."/>
            <person name="Radey M."/>
            <person name="Guina T."/>
            <person name="Svensson K."/>
            <person name="Hayden H.S."/>
            <person name="Jacobs M."/>
            <person name="Gallagher L.A."/>
            <person name="Manoil C."/>
            <person name="Ernst R.K."/>
            <person name="Drees B."/>
            <person name="Buckley D."/>
            <person name="Haugen E."/>
            <person name="Bovee D."/>
            <person name="Zhou Y."/>
            <person name="Chang J."/>
            <person name="Levy R."/>
            <person name="Lim R."/>
            <person name="Gillett W."/>
            <person name="Guenthener D."/>
            <person name="Kang A."/>
            <person name="Shaffer S.A."/>
            <person name="Taylor G."/>
            <person name="Chen J."/>
            <person name="Gallis B."/>
            <person name="D'Argenio D.A."/>
            <person name="Forsman M."/>
            <person name="Olson M.V."/>
            <person name="Goodlett D.R."/>
            <person name="Kaul R."/>
            <person name="Miller S.I."/>
            <person name="Brittnacher M.J."/>
        </authorList>
    </citation>
    <scope>NUCLEOTIDE SEQUENCE [LARGE SCALE GENOMIC DNA]</scope>
    <source>
        <strain>U112</strain>
    </source>
</reference>
<protein>
    <recommendedName>
        <fullName evidence="1">Shikimate kinase</fullName>
        <shortName evidence="1">SK</shortName>
        <ecNumber evidence="1">2.7.1.71</ecNumber>
    </recommendedName>
</protein>
<comment type="function">
    <text evidence="1">Catalyzes the specific phosphorylation of the 3-hydroxyl group of shikimic acid using ATP as a cosubstrate.</text>
</comment>
<comment type="catalytic activity">
    <reaction evidence="1">
        <text>shikimate + ATP = 3-phosphoshikimate + ADP + H(+)</text>
        <dbReference type="Rhea" id="RHEA:13121"/>
        <dbReference type="ChEBI" id="CHEBI:15378"/>
        <dbReference type="ChEBI" id="CHEBI:30616"/>
        <dbReference type="ChEBI" id="CHEBI:36208"/>
        <dbReference type="ChEBI" id="CHEBI:145989"/>
        <dbReference type="ChEBI" id="CHEBI:456216"/>
        <dbReference type="EC" id="2.7.1.71"/>
    </reaction>
</comment>
<comment type="cofactor">
    <cofactor evidence="1">
        <name>Mg(2+)</name>
        <dbReference type="ChEBI" id="CHEBI:18420"/>
    </cofactor>
    <text evidence="1">Binds 1 Mg(2+) ion per subunit.</text>
</comment>
<comment type="pathway">
    <text evidence="1">Metabolic intermediate biosynthesis; chorismate biosynthesis; chorismate from D-erythrose 4-phosphate and phosphoenolpyruvate: step 5/7.</text>
</comment>
<comment type="subunit">
    <text evidence="1">Monomer.</text>
</comment>
<comment type="subcellular location">
    <subcellularLocation>
        <location evidence="1">Cytoplasm</location>
    </subcellularLocation>
</comment>
<comment type="similarity">
    <text evidence="1">Belongs to the shikimate kinase family.</text>
</comment>
<dbReference type="EC" id="2.7.1.71" evidence="1"/>
<dbReference type="EMBL" id="CP000439">
    <property type="protein sequence ID" value="ABK90022.1"/>
    <property type="molecule type" value="Genomic_DNA"/>
</dbReference>
<dbReference type="RefSeq" id="WP_003018629.1">
    <property type="nucleotide sequence ID" value="NZ_CP009633.1"/>
</dbReference>
<dbReference type="SMR" id="A0Q707"/>
<dbReference type="GeneID" id="75265130"/>
<dbReference type="KEGG" id="ftn:FTN_1136"/>
<dbReference type="KEGG" id="ftx:AW25_872"/>
<dbReference type="BioCyc" id="FTUL401614:G1G75-1178-MONOMER"/>
<dbReference type="UniPathway" id="UPA00053">
    <property type="reaction ID" value="UER00088"/>
</dbReference>
<dbReference type="Proteomes" id="UP000000762">
    <property type="component" value="Chromosome"/>
</dbReference>
<dbReference type="GO" id="GO:0005829">
    <property type="term" value="C:cytosol"/>
    <property type="evidence" value="ECO:0007669"/>
    <property type="project" value="TreeGrafter"/>
</dbReference>
<dbReference type="GO" id="GO:0005524">
    <property type="term" value="F:ATP binding"/>
    <property type="evidence" value="ECO:0007669"/>
    <property type="project" value="UniProtKB-UniRule"/>
</dbReference>
<dbReference type="GO" id="GO:0016887">
    <property type="term" value="F:ATP hydrolysis activity"/>
    <property type="evidence" value="ECO:0007669"/>
    <property type="project" value="InterPro"/>
</dbReference>
<dbReference type="GO" id="GO:0000287">
    <property type="term" value="F:magnesium ion binding"/>
    <property type="evidence" value="ECO:0007669"/>
    <property type="project" value="UniProtKB-UniRule"/>
</dbReference>
<dbReference type="GO" id="GO:0004765">
    <property type="term" value="F:shikimate kinase activity"/>
    <property type="evidence" value="ECO:0007669"/>
    <property type="project" value="UniProtKB-UniRule"/>
</dbReference>
<dbReference type="GO" id="GO:0008652">
    <property type="term" value="P:amino acid biosynthetic process"/>
    <property type="evidence" value="ECO:0007669"/>
    <property type="project" value="UniProtKB-KW"/>
</dbReference>
<dbReference type="GO" id="GO:0009073">
    <property type="term" value="P:aromatic amino acid family biosynthetic process"/>
    <property type="evidence" value="ECO:0007669"/>
    <property type="project" value="UniProtKB-KW"/>
</dbReference>
<dbReference type="GO" id="GO:0009423">
    <property type="term" value="P:chorismate biosynthetic process"/>
    <property type="evidence" value="ECO:0007669"/>
    <property type="project" value="UniProtKB-UniRule"/>
</dbReference>
<dbReference type="CDD" id="cd00464">
    <property type="entry name" value="SK"/>
    <property type="match status" value="1"/>
</dbReference>
<dbReference type="Gene3D" id="3.40.50.300">
    <property type="entry name" value="P-loop containing nucleotide triphosphate hydrolases"/>
    <property type="match status" value="1"/>
</dbReference>
<dbReference type="HAMAP" id="MF_00109">
    <property type="entry name" value="Shikimate_kinase"/>
    <property type="match status" value="1"/>
</dbReference>
<dbReference type="InterPro" id="IPR003593">
    <property type="entry name" value="AAA+_ATPase"/>
</dbReference>
<dbReference type="InterPro" id="IPR027417">
    <property type="entry name" value="P-loop_NTPase"/>
</dbReference>
<dbReference type="InterPro" id="IPR031322">
    <property type="entry name" value="Shikimate/glucono_kinase"/>
</dbReference>
<dbReference type="InterPro" id="IPR000623">
    <property type="entry name" value="Shikimate_kinase/TSH1"/>
</dbReference>
<dbReference type="InterPro" id="IPR023000">
    <property type="entry name" value="Shikimate_kinase_CS"/>
</dbReference>
<dbReference type="NCBIfam" id="NF003456">
    <property type="entry name" value="PRK05057.1"/>
    <property type="match status" value="1"/>
</dbReference>
<dbReference type="PANTHER" id="PTHR21087">
    <property type="entry name" value="SHIKIMATE KINASE"/>
    <property type="match status" value="1"/>
</dbReference>
<dbReference type="PANTHER" id="PTHR21087:SF16">
    <property type="entry name" value="SHIKIMATE KINASE 1, CHLOROPLASTIC"/>
    <property type="match status" value="1"/>
</dbReference>
<dbReference type="Pfam" id="PF01202">
    <property type="entry name" value="SKI"/>
    <property type="match status" value="1"/>
</dbReference>
<dbReference type="PRINTS" id="PR01100">
    <property type="entry name" value="SHIKIMTKNASE"/>
</dbReference>
<dbReference type="SMART" id="SM00382">
    <property type="entry name" value="AAA"/>
    <property type="match status" value="1"/>
</dbReference>
<dbReference type="SUPFAM" id="SSF52540">
    <property type="entry name" value="P-loop containing nucleoside triphosphate hydrolases"/>
    <property type="match status" value="1"/>
</dbReference>
<dbReference type="PROSITE" id="PS01128">
    <property type="entry name" value="SHIKIMATE_KINASE"/>
    <property type="match status" value="1"/>
</dbReference>
<keyword id="KW-0028">Amino-acid biosynthesis</keyword>
<keyword id="KW-0057">Aromatic amino acid biosynthesis</keyword>
<keyword id="KW-0067">ATP-binding</keyword>
<keyword id="KW-0963">Cytoplasm</keyword>
<keyword id="KW-0418">Kinase</keyword>
<keyword id="KW-0460">Magnesium</keyword>
<keyword id="KW-0479">Metal-binding</keyword>
<keyword id="KW-0547">Nucleotide-binding</keyword>
<keyword id="KW-0808">Transferase</keyword>